<sequence>MNIREAIAAVVARRDLTQAEAASVMEEIMSGTATPAQIGAFLTALHMKGETDAEIAGMAAVMREKATHVYFDGPVIDTCGTGGDGAHTFNISTTAAFVAAGAGLTVAKHGNRAMSSVCGSADVLEGLGVQIELDAEGVARCLREAGIGFMFAPKFHPAMRFAGPVRREIGIRTVFNILGPLTNPARARYQVLGVASAALAEKLAYALSRLDTVHALVVHGDGGVDELTLSGPNLIFDVRAGQAPRQMLVAPEDVGLPRAPQDALRGGDVAYNVAIVRAILSGEEHGPRRDVVLFNAAAAMVAGDLAPDLATGVAMARHSIDSGRALERLNQMIAVSRGE</sequence>
<evidence type="ECO:0000255" key="1">
    <source>
        <dbReference type="HAMAP-Rule" id="MF_00211"/>
    </source>
</evidence>
<proteinExistence type="inferred from homology"/>
<accession>A9WCH7</accession>
<reference key="1">
    <citation type="journal article" date="2011" name="BMC Genomics">
        <title>Complete genome sequence of the filamentous anoxygenic phototrophic bacterium Chloroflexus aurantiacus.</title>
        <authorList>
            <person name="Tang K.H."/>
            <person name="Barry K."/>
            <person name="Chertkov O."/>
            <person name="Dalin E."/>
            <person name="Han C.S."/>
            <person name="Hauser L.J."/>
            <person name="Honchak B.M."/>
            <person name="Karbach L.E."/>
            <person name="Land M.L."/>
            <person name="Lapidus A."/>
            <person name="Larimer F.W."/>
            <person name="Mikhailova N."/>
            <person name="Pitluck S."/>
            <person name="Pierson B.K."/>
            <person name="Blankenship R.E."/>
        </authorList>
    </citation>
    <scope>NUCLEOTIDE SEQUENCE [LARGE SCALE GENOMIC DNA]</scope>
    <source>
        <strain>ATCC 29366 / DSM 635 / J-10-fl</strain>
    </source>
</reference>
<name>TRPD_CHLAA</name>
<dbReference type="EC" id="2.4.2.18" evidence="1"/>
<dbReference type="EMBL" id="CP000909">
    <property type="protein sequence ID" value="ABY34968.1"/>
    <property type="molecule type" value="Genomic_DNA"/>
</dbReference>
<dbReference type="RefSeq" id="WP_012257622.1">
    <property type="nucleotide sequence ID" value="NC_010175.1"/>
</dbReference>
<dbReference type="RefSeq" id="YP_001635357.1">
    <property type="nucleotide sequence ID" value="NC_010175.1"/>
</dbReference>
<dbReference type="SMR" id="A9WCH7"/>
<dbReference type="FunCoup" id="A9WCH7">
    <property type="interactions" value="415"/>
</dbReference>
<dbReference type="STRING" id="324602.Caur_1751"/>
<dbReference type="EnsemblBacteria" id="ABY34968">
    <property type="protein sequence ID" value="ABY34968"/>
    <property type="gene ID" value="Caur_1751"/>
</dbReference>
<dbReference type="KEGG" id="cau:Caur_1751"/>
<dbReference type="PATRIC" id="fig|324602.8.peg.1997"/>
<dbReference type="eggNOG" id="COG0547">
    <property type="taxonomic scope" value="Bacteria"/>
</dbReference>
<dbReference type="HOGENOM" id="CLU_034315_2_1_0"/>
<dbReference type="InParanoid" id="A9WCH7"/>
<dbReference type="UniPathway" id="UPA00035">
    <property type="reaction ID" value="UER00041"/>
</dbReference>
<dbReference type="Proteomes" id="UP000002008">
    <property type="component" value="Chromosome"/>
</dbReference>
<dbReference type="GO" id="GO:0005829">
    <property type="term" value="C:cytosol"/>
    <property type="evidence" value="ECO:0000318"/>
    <property type="project" value="GO_Central"/>
</dbReference>
<dbReference type="GO" id="GO:0004048">
    <property type="term" value="F:anthranilate phosphoribosyltransferase activity"/>
    <property type="evidence" value="ECO:0007669"/>
    <property type="project" value="UniProtKB-UniRule"/>
</dbReference>
<dbReference type="GO" id="GO:0000287">
    <property type="term" value="F:magnesium ion binding"/>
    <property type="evidence" value="ECO:0007669"/>
    <property type="project" value="UniProtKB-UniRule"/>
</dbReference>
<dbReference type="GO" id="GO:0000162">
    <property type="term" value="P:L-tryptophan biosynthetic process"/>
    <property type="evidence" value="ECO:0000318"/>
    <property type="project" value="GO_Central"/>
</dbReference>
<dbReference type="FunFam" id="1.20.970.10:FF:000006">
    <property type="entry name" value="Anthranilate phosphoribosyltransferase"/>
    <property type="match status" value="1"/>
</dbReference>
<dbReference type="FunFam" id="3.40.1030.10:FF:000002">
    <property type="entry name" value="Anthranilate phosphoribosyltransferase"/>
    <property type="match status" value="1"/>
</dbReference>
<dbReference type="Gene3D" id="3.40.1030.10">
    <property type="entry name" value="Nucleoside phosphorylase/phosphoribosyltransferase catalytic domain"/>
    <property type="match status" value="1"/>
</dbReference>
<dbReference type="Gene3D" id="1.20.970.10">
    <property type="entry name" value="Transferase, Pyrimidine Nucleoside Phosphorylase, Chain C"/>
    <property type="match status" value="1"/>
</dbReference>
<dbReference type="HAMAP" id="MF_00211">
    <property type="entry name" value="TrpD"/>
    <property type="match status" value="1"/>
</dbReference>
<dbReference type="InterPro" id="IPR005940">
    <property type="entry name" value="Anthranilate_Pribosyl_Tfrase"/>
</dbReference>
<dbReference type="InterPro" id="IPR000312">
    <property type="entry name" value="Glycosyl_Trfase_fam3"/>
</dbReference>
<dbReference type="InterPro" id="IPR017459">
    <property type="entry name" value="Glycosyl_Trfase_fam3_N_dom"/>
</dbReference>
<dbReference type="InterPro" id="IPR036320">
    <property type="entry name" value="Glycosyl_Trfase_fam3_N_dom_sf"/>
</dbReference>
<dbReference type="InterPro" id="IPR035902">
    <property type="entry name" value="Nuc_phospho_transferase"/>
</dbReference>
<dbReference type="NCBIfam" id="TIGR01245">
    <property type="entry name" value="trpD"/>
    <property type="match status" value="1"/>
</dbReference>
<dbReference type="PANTHER" id="PTHR43285">
    <property type="entry name" value="ANTHRANILATE PHOSPHORIBOSYLTRANSFERASE"/>
    <property type="match status" value="1"/>
</dbReference>
<dbReference type="PANTHER" id="PTHR43285:SF2">
    <property type="entry name" value="ANTHRANILATE PHOSPHORIBOSYLTRANSFERASE"/>
    <property type="match status" value="1"/>
</dbReference>
<dbReference type="Pfam" id="PF02885">
    <property type="entry name" value="Glycos_trans_3N"/>
    <property type="match status" value="1"/>
</dbReference>
<dbReference type="Pfam" id="PF00591">
    <property type="entry name" value="Glycos_transf_3"/>
    <property type="match status" value="1"/>
</dbReference>
<dbReference type="SUPFAM" id="SSF52418">
    <property type="entry name" value="Nucleoside phosphorylase/phosphoribosyltransferase catalytic domain"/>
    <property type="match status" value="1"/>
</dbReference>
<dbReference type="SUPFAM" id="SSF47648">
    <property type="entry name" value="Nucleoside phosphorylase/phosphoribosyltransferase N-terminal domain"/>
    <property type="match status" value="1"/>
</dbReference>
<comment type="function">
    <text evidence="1">Catalyzes the transfer of the phosphoribosyl group of 5-phosphorylribose-1-pyrophosphate (PRPP) to anthranilate to yield N-(5'-phosphoribosyl)-anthranilate (PRA).</text>
</comment>
<comment type="catalytic activity">
    <reaction evidence="1">
        <text>N-(5-phospho-beta-D-ribosyl)anthranilate + diphosphate = 5-phospho-alpha-D-ribose 1-diphosphate + anthranilate</text>
        <dbReference type="Rhea" id="RHEA:11768"/>
        <dbReference type="ChEBI" id="CHEBI:16567"/>
        <dbReference type="ChEBI" id="CHEBI:18277"/>
        <dbReference type="ChEBI" id="CHEBI:33019"/>
        <dbReference type="ChEBI" id="CHEBI:58017"/>
        <dbReference type="EC" id="2.4.2.18"/>
    </reaction>
</comment>
<comment type="cofactor">
    <cofactor evidence="1">
        <name>Mg(2+)</name>
        <dbReference type="ChEBI" id="CHEBI:18420"/>
    </cofactor>
    <text evidence="1">Binds 2 magnesium ions per monomer.</text>
</comment>
<comment type="pathway">
    <text evidence="1">Amino-acid biosynthesis; L-tryptophan biosynthesis; L-tryptophan from chorismate: step 2/5.</text>
</comment>
<comment type="subunit">
    <text evidence="1">Homodimer.</text>
</comment>
<comment type="similarity">
    <text evidence="1">Belongs to the anthranilate phosphoribosyltransferase family.</text>
</comment>
<organism>
    <name type="scientific">Chloroflexus aurantiacus (strain ATCC 29366 / DSM 635 / J-10-fl)</name>
    <dbReference type="NCBI Taxonomy" id="324602"/>
    <lineage>
        <taxon>Bacteria</taxon>
        <taxon>Bacillati</taxon>
        <taxon>Chloroflexota</taxon>
        <taxon>Chloroflexia</taxon>
        <taxon>Chloroflexales</taxon>
        <taxon>Chloroflexineae</taxon>
        <taxon>Chloroflexaceae</taxon>
        <taxon>Chloroflexus</taxon>
    </lineage>
</organism>
<gene>
    <name evidence="1" type="primary">trpD</name>
    <name type="ordered locus">Caur_1751</name>
</gene>
<keyword id="KW-0028">Amino-acid biosynthesis</keyword>
<keyword id="KW-0057">Aromatic amino acid biosynthesis</keyword>
<keyword id="KW-0328">Glycosyltransferase</keyword>
<keyword id="KW-0460">Magnesium</keyword>
<keyword id="KW-0479">Metal-binding</keyword>
<keyword id="KW-1185">Reference proteome</keyword>
<keyword id="KW-0808">Transferase</keyword>
<keyword id="KW-0822">Tryptophan biosynthesis</keyword>
<feature type="chain" id="PRO_1000078009" description="Anthranilate phosphoribosyltransferase">
    <location>
        <begin position="1"/>
        <end position="339"/>
    </location>
</feature>
<feature type="binding site" evidence="1">
    <location>
        <position position="80"/>
    </location>
    <ligand>
        <name>5-phospho-alpha-D-ribose 1-diphosphate</name>
        <dbReference type="ChEBI" id="CHEBI:58017"/>
    </ligand>
</feature>
<feature type="binding site" evidence="1">
    <location>
        <position position="80"/>
    </location>
    <ligand>
        <name>anthranilate</name>
        <dbReference type="ChEBI" id="CHEBI:16567"/>
        <label>1</label>
    </ligand>
</feature>
<feature type="binding site" evidence="1">
    <location>
        <begin position="83"/>
        <end position="84"/>
    </location>
    <ligand>
        <name>5-phospho-alpha-D-ribose 1-diphosphate</name>
        <dbReference type="ChEBI" id="CHEBI:58017"/>
    </ligand>
</feature>
<feature type="binding site" evidence="1">
    <location>
        <position position="88"/>
    </location>
    <ligand>
        <name>5-phospho-alpha-D-ribose 1-diphosphate</name>
        <dbReference type="ChEBI" id="CHEBI:58017"/>
    </ligand>
</feature>
<feature type="binding site" evidence="1">
    <location>
        <begin position="90"/>
        <end position="93"/>
    </location>
    <ligand>
        <name>5-phospho-alpha-D-ribose 1-diphosphate</name>
        <dbReference type="ChEBI" id="CHEBI:58017"/>
    </ligand>
</feature>
<feature type="binding site" evidence="1">
    <location>
        <position position="92"/>
    </location>
    <ligand>
        <name>Mg(2+)</name>
        <dbReference type="ChEBI" id="CHEBI:18420"/>
        <label>1</label>
    </ligand>
</feature>
<feature type="binding site" evidence="1">
    <location>
        <begin position="108"/>
        <end position="116"/>
    </location>
    <ligand>
        <name>5-phospho-alpha-D-ribose 1-diphosphate</name>
        <dbReference type="ChEBI" id="CHEBI:58017"/>
    </ligand>
</feature>
<feature type="binding site" evidence="1">
    <location>
        <position position="111"/>
    </location>
    <ligand>
        <name>anthranilate</name>
        <dbReference type="ChEBI" id="CHEBI:16567"/>
        <label>1</label>
    </ligand>
</feature>
<feature type="binding site" evidence="1">
    <location>
        <position position="120"/>
    </location>
    <ligand>
        <name>5-phospho-alpha-D-ribose 1-diphosphate</name>
        <dbReference type="ChEBI" id="CHEBI:58017"/>
    </ligand>
</feature>
<feature type="binding site" evidence="1">
    <location>
        <position position="166"/>
    </location>
    <ligand>
        <name>anthranilate</name>
        <dbReference type="ChEBI" id="CHEBI:16567"/>
        <label>2</label>
    </ligand>
</feature>
<feature type="binding site" evidence="1">
    <location>
        <position position="225"/>
    </location>
    <ligand>
        <name>Mg(2+)</name>
        <dbReference type="ChEBI" id="CHEBI:18420"/>
        <label>2</label>
    </ligand>
</feature>
<feature type="binding site" evidence="1">
    <location>
        <position position="226"/>
    </location>
    <ligand>
        <name>Mg(2+)</name>
        <dbReference type="ChEBI" id="CHEBI:18420"/>
        <label>1</label>
    </ligand>
</feature>
<feature type="binding site" evidence="1">
    <location>
        <position position="226"/>
    </location>
    <ligand>
        <name>Mg(2+)</name>
        <dbReference type="ChEBI" id="CHEBI:18420"/>
        <label>2</label>
    </ligand>
</feature>
<protein>
    <recommendedName>
        <fullName evidence="1">Anthranilate phosphoribosyltransferase</fullName>
        <ecNumber evidence="1">2.4.2.18</ecNumber>
    </recommendedName>
</protein>